<dbReference type="GO" id="GO:0005576">
    <property type="term" value="C:extracellular region"/>
    <property type="evidence" value="ECO:0007669"/>
    <property type="project" value="UniProtKB-SubCell"/>
</dbReference>
<dbReference type="GO" id="GO:0045087">
    <property type="term" value="P:innate immune response"/>
    <property type="evidence" value="ECO:0007669"/>
    <property type="project" value="UniProtKB-KW"/>
</dbReference>
<reference key="1">
    <citation type="journal article" date="2013" name="Peptides">
        <title>An immunomodulatory peptide related to frenatin 2 from skin secretions of the Tyrrhenian painted frog Discoglossus sardus (Alytidae).</title>
        <authorList>
            <person name="Conlon J.M."/>
            <person name="Mechkarska M."/>
            <person name="Pantic J.M."/>
            <person name="Lukic M.L."/>
            <person name="Coquet L."/>
            <person name="Leprince J."/>
            <person name="Nielsen P.F."/>
            <person name="Rinaldi A.C."/>
        </authorList>
    </citation>
    <scope>PROTEIN SEQUENCE</scope>
    <scope>FUNCTION</scope>
    <scope>SUBCELLULAR LOCATION</scope>
    <scope>SYNTHESIS</scope>
    <scope>MASS SPECTROMETRY</scope>
    <scope>AMIDATION AT ILE-14</scope>
    <source>
        <tissue>Skin secretion</tissue>
    </source>
</reference>
<reference key="2">
    <citation type="journal article" date="2019" name="Biochimie">
        <title>Insulinotropic activity of the host-defense peptide frenatin 2D: conformational, structure-function and mechanistic studies.</title>
        <authorList>
            <person name="Musale V."/>
            <person name="Guilhaudis L."/>
            <person name="Abdel-Wahab Y.H.A."/>
            <person name="Flatt P.R."/>
            <person name="Conlon J.M."/>
        </authorList>
    </citation>
    <scope>FUNCTION</scope>
    <scope>SYNTHESIS</scope>
    <scope>MUTAGENESIS OF ASP-1; THR-5; GLY-7; ASN-8; PRO-10; 12-PRO-PHE-13 AND ILE-14</scope>
</reference>
<feature type="peptide" id="PRO_0000450236" description="Frenatin-2D" evidence="1">
    <location>
        <begin position="1"/>
        <end position="14"/>
    </location>
</feature>
<feature type="modified residue" description="Isoleucine amide" evidence="1">
    <location>
        <position position="14"/>
    </location>
</feature>
<feature type="mutagenesis site" description="No change in insulin-release stimulation." evidence="2">
    <original>D</original>
    <variation>W</variation>
    <location>
        <position position="1"/>
    </location>
</feature>
<feature type="mutagenesis site" description="Loss of insulin-release stimulation (&gt;30,000-fold)." evidence="2">
    <original>T</original>
    <variation>W</variation>
    <location>
        <position position="5"/>
    </location>
</feature>
<feature type="mutagenesis site" description="No change in insulin-release stimulation." evidence="2">
    <original>G</original>
    <variation>W</variation>
    <location>
        <position position="7"/>
    </location>
</feature>
<feature type="mutagenesis site" description="Loss of insulin-release stimulation (&gt;30,000-fold)." evidence="2">
    <original>N</original>
    <variation>W</variation>
    <location>
        <position position="8"/>
    </location>
</feature>
<feature type="mutagenesis site" description="Loss of insulin-release stimulation (&gt;30,000-fold)." evidence="2">
    <original>P</original>
    <variation>W</variation>
    <location>
        <position position="10"/>
    </location>
</feature>
<feature type="mutagenesis site" description="Loss of insulin-release stimulation (&gt;30,000-fold)." evidence="2">
    <original>PF</original>
    <variation>FP</variation>
    <location>
        <begin position="12"/>
        <end position="13"/>
    </location>
</feature>
<feature type="mutagenesis site" description="Loss of insulin-release stimulation (&gt;30,000-fold)." evidence="2">
    <original>I</original>
    <variation>W</variation>
    <location>
        <position position="14"/>
    </location>
</feature>
<proteinExistence type="evidence at protein level"/>
<accession>P0DTV5</accession>
<organism>
    <name type="scientific">Discoglossus sardus</name>
    <name type="common">Tyrrhenian painted frog</name>
    <dbReference type="NCBI Taxonomy" id="191474"/>
    <lineage>
        <taxon>Eukaryota</taxon>
        <taxon>Metazoa</taxon>
        <taxon>Chordata</taxon>
        <taxon>Craniata</taxon>
        <taxon>Vertebrata</taxon>
        <taxon>Euteleostomi</taxon>
        <taxon>Amphibia</taxon>
        <taxon>Batrachia</taxon>
        <taxon>Anura</taxon>
        <taxon>Alytidae</taxon>
        <taxon>Discoglossinae</taxon>
        <taxon>Discoglossus</taxon>
    </lineage>
</organism>
<name>FRE2D_DISSA</name>
<sequence>DLLGTLGNLPLPFI</sequence>
<keyword id="KW-0027">Amidation</keyword>
<keyword id="KW-0878">Amphibian defense peptide</keyword>
<keyword id="KW-0903">Direct protein sequencing</keyword>
<keyword id="KW-0391">Immunity</keyword>
<keyword id="KW-0399">Innate immunity</keyword>
<keyword id="KW-0964">Secreted</keyword>
<protein>
    <recommendedName>
        <fullName evidence="3">Frenatin-2D</fullName>
    </recommendedName>
    <alternativeName>
        <fullName evidence="3">Host-defense peptide</fullName>
    </alternativeName>
</protein>
<comment type="function">
    <text evidence="1 2">Peptide with unknown biological function that may act on skin macrophages to produce a cytokine-mediated stimulation of the adaptive immune system in response to invasion by microorganisms (PubMed:23262358). It does not show antimicrobial and hemolytic activities but stimulates production of the pro-inflammatory cytokines TNF-alpha and IL-1beta by mouse peritoneal macrophages and does not potentiate the stimulation produced by lipopolysaccharide (LPS) (PubMed:23262358). The peptide increases IL-12 production in both unstimulated and LPS-stimulated cells, but it does not stimulate IL-6 production in a significant manner (PubMed:23262358). Stimulates insulin release from pancreatic beta-cells in a dose-dependent manner (PubMed:30244134). This insulinotropic activity is relatively weak compared to that of GLP-1 (PubMed:30244134). Acts without effects on membrane depolarization or changes in calcium current (PubMed:30244134). Insulin release is predominantly mediated by the K(ATP) channel-independent pathway (PubMed:30244134). Like GLP-1, but in a less potent manner, this peptide stimulates beta-cell proliferation (PubMed:30244134). In a comparable potency to that provided by GLP-1, also provides protection of cells against cytokine-induced apoptosis (PubMed:30244134).</text>
</comment>
<comment type="subcellular location">
    <subcellularLocation>
        <location evidence="1">Secreted</location>
    </subcellularLocation>
</comment>
<comment type="tissue specificity">
    <text evidence="5">Expressed by the skin glands.</text>
</comment>
<comment type="PTM">
    <text evidence="2">Ile-14 amidation is not necessary for insulin release stimulation, since the synthetic non-amidated peptide shows the same activity as the amidated peptide.</text>
</comment>
<comment type="mass spectrometry"/>
<comment type="similarity">
    <text evidence="4">Belongs to the frog skin active peptide (FSAP) family. Frenatin subfamily.</text>
</comment>
<evidence type="ECO:0000269" key="1">
    <source>
    </source>
</evidence>
<evidence type="ECO:0000269" key="2">
    <source>
    </source>
</evidence>
<evidence type="ECO:0000303" key="3">
    <source>
    </source>
</evidence>
<evidence type="ECO:0000305" key="4"/>
<evidence type="ECO:0000305" key="5">
    <source>
    </source>
</evidence>